<proteinExistence type="inferred from homology"/>
<sequence>MLKLQKKLKNDYGLVFNDEYLLKTAFTHSSFTNEERLPKIANNERLEFLGDVALSLVISDYLYRTYPEKLEGELSKMRSSIVRTESLANFSRSCGFGEFLRLGHGEEKMGGRDRETTLENLFEAFLGALFIDQGMDEVRKFIQHVVIPHVKNDDYVKVIDYKTELQEVLQIGGETTISYKILKEEGPAHDRSFVAAVFNNGKELGRGLGKSKKVAEQKAAENAIKGQNHVS</sequence>
<evidence type="ECO:0000255" key="1">
    <source>
        <dbReference type="HAMAP-Rule" id="MF_00104"/>
    </source>
</evidence>
<reference key="1">
    <citation type="journal article" date="2007" name="J. Bacteriol.">
        <title>The complete genome sequence of the lactic acid bacterial paradigm Lactococcus lactis subsp. cremoris MG1363.</title>
        <authorList>
            <person name="Wegmann U."/>
            <person name="O'Connell-Motherway M."/>
            <person name="Zomer A."/>
            <person name="Buist G."/>
            <person name="Shearman C."/>
            <person name="Canchaya C."/>
            <person name="Ventura M."/>
            <person name="Goesmann A."/>
            <person name="Gasson M.J."/>
            <person name="Kuipers O.P."/>
            <person name="van Sinderen D."/>
            <person name="Kok J."/>
        </authorList>
    </citation>
    <scope>NUCLEOTIDE SEQUENCE [LARGE SCALE GENOMIC DNA]</scope>
    <source>
        <strain>MG1363</strain>
    </source>
</reference>
<comment type="function">
    <text evidence="1">Digests double-stranded RNA. Involved in the processing of primary rRNA transcript to yield the immediate precursors to the large and small rRNAs (23S and 16S). Processes some mRNAs, and tRNAs when they are encoded in the rRNA operon. Processes pre-crRNA and tracrRNA of type II CRISPR loci if present in the organism.</text>
</comment>
<comment type="catalytic activity">
    <reaction evidence="1">
        <text>Endonucleolytic cleavage to 5'-phosphomonoester.</text>
        <dbReference type="EC" id="3.1.26.3"/>
    </reaction>
</comment>
<comment type="cofactor">
    <cofactor evidence="1">
        <name>Mg(2+)</name>
        <dbReference type="ChEBI" id="CHEBI:18420"/>
    </cofactor>
</comment>
<comment type="subunit">
    <text evidence="1">Homodimer.</text>
</comment>
<comment type="subcellular location">
    <subcellularLocation>
        <location evidence="1">Cytoplasm</location>
    </subcellularLocation>
</comment>
<comment type="similarity">
    <text evidence="1">Belongs to the ribonuclease III family.</text>
</comment>
<dbReference type="EC" id="3.1.26.3" evidence="1"/>
<dbReference type="EMBL" id="AM406671">
    <property type="protein sequence ID" value="CAL98325.1"/>
    <property type="molecule type" value="Genomic_DNA"/>
</dbReference>
<dbReference type="RefSeq" id="WP_011835540.1">
    <property type="nucleotide sequence ID" value="NC_009004.1"/>
</dbReference>
<dbReference type="SMR" id="A2RLZ8"/>
<dbReference type="STRING" id="416870.llmg_1753"/>
<dbReference type="KEGG" id="llm:llmg_1753"/>
<dbReference type="eggNOG" id="COG0571">
    <property type="taxonomic scope" value="Bacteria"/>
</dbReference>
<dbReference type="HOGENOM" id="CLU_000907_1_3_9"/>
<dbReference type="OrthoDB" id="9805026at2"/>
<dbReference type="PhylomeDB" id="A2RLZ8"/>
<dbReference type="Proteomes" id="UP000000364">
    <property type="component" value="Chromosome"/>
</dbReference>
<dbReference type="GO" id="GO:0005737">
    <property type="term" value="C:cytoplasm"/>
    <property type="evidence" value="ECO:0007669"/>
    <property type="project" value="UniProtKB-SubCell"/>
</dbReference>
<dbReference type="GO" id="GO:0003725">
    <property type="term" value="F:double-stranded RNA binding"/>
    <property type="evidence" value="ECO:0007669"/>
    <property type="project" value="TreeGrafter"/>
</dbReference>
<dbReference type="GO" id="GO:0046872">
    <property type="term" value="F:metal ion binding"/>
    <property type="evidence" value="ECO:0007669"/>
    <property type="project" value="UniProtKB-KW"/>
</dbReference>
<dbReference type="GO" id="GO:0004525">
    <property type="term" value="F:ribonuclease III activity"/>
    <property type="evidence" value="ECO:0007669"/>
    <property type="project" value="UniProtKB-UniRule"/>
</dbReference>
<dbReference type="GO" id="GO:0019843">
    <property type="term" value="F:rRNA binding"/>
    <property type="evidence" value="ECO:0007669"/>
    <property type="project" value="UniProtKB-KW"/>
</dbReference>
<dbReference type="GO" id="GO:0006397">
    <property type="term" value="P:mRNA processing"/>
    <property type="evidence" value="ECO:0007669"/>
    <property type="project" value="UniProtKB-UniRule"/>
</dbReference>
<dbReference type="GO" id="GO:0010468">
    <property type="term" value="P:regulation of gene expression"/>
    <property type="evidence" value="ECO:0007669"/>
    <property type="project" value="TreeGrafter"/>
</dbReference>
<dbReference type="GO" id="GO:0006364">
    <property type="term" value="P:rRNA processing"/>
    <property type="evidence" value="ECO:0007669"/>
    <property type="project" value="UniProtKB-UniRule"/>
</dbReference>
<dbReference type="GO" id="GO:0008033">
    <property type="term" value="P:tRNA processing"/>
    <property type="evidence" value="ECO:0007669"/>
    <property type="project" value="UniProtKB-KW"/>
</dbReference>
<dbReference type="CDD" id="cd10845">
    <property type="entry name" value="DSRM_RNAse_III_family"/>
    <property type="match status" value="1"/>
</dbReference>
<dbReference type="CDD" id="cd00593">
    <property type="entry name" value="RIBOc"/>
    <property type="match status" value="1"/>
</dbReference>
<dbReference type="FunFam" id="1.10.1520.10:FF:000001">
    <property type="entry name" value="Ribonuclease 3"/>
    <property type="match status" value="1"/>
</dbReference>
<dbReference type="FunFam" id="3.30.160.20:FF:000003">
    <property type="entry name" value="Ribonuclease 3"/>
    <property type="match status" value="1"/>
</dbReference>
<dbReference type="Gene3D" id="3.30.160.20">
    <property type="match status" value="1"/>
</dbReference>
<dbReference type="Gene3D" id="1.10.1520.10">
    <property type="entry name" value="Ribonuclease III domain"/>
    <property type="match status" value="1"/>
</dbReference>
<dbReference type="HAMAP" id="MF_00104">
    <property type="entry name" value="RNase_III"/>
    <property type="match status" value="1"/>
</dbReference>
<dbReference type="InterPro" id="IPR014720">
    <property type="entry name" value="dsRBD_dom"/>
</dbReference>
<dbReference type="InterPro" id="IPR011907">
    <property type="entry name" value="RNase_III"/>
</dbReference>
<dbReference type="InterPro" id="IPR000999">
    <property type="entry name" value="RNase_III_dom"/>
</dbReference>
<dbReference type="InterPro" id="IPR036389">
    <property type="entry name" value="RNase_III_sf"/>
</dbReference>
<dbReference type="NCBIfam" id="TIGR02191">
    <property type="entry name" value="RNaseIII"/>
    <property type="match status" value="1"/>
</dbReference>
<dbReference type="PANTHER" id="PTHR11207:SF0">
    <property type="entry name" value="RIBONUCLEASE 3"/>
    <property type="match status" value="1"/>
</dbReference>
<dbReference type="PANTHER" id="PTHR11207">
    <property type="entry name" value="RIBONUCLEASE III"/>
    <property type="match status" value="1"/>
</dbReference>
<dbReference type="Pfam" id="PF00035">
    <property type="entry name" value="dsrm"/>
    <property type="match status" value="1"/>
</dbReference>
<dbReference type="Pfam" id="PF14622">
    <property type="entry name" value="Ribonucleas_3_3"/>
    <property type="match status" value="1"/>
</dbReference>
<dbReference type="SMART" id="SM00358">
    <property type="entry name" value="DSRM"/>
    <property type="match status" value="1"/>
</dbReference>
<dbReference type="SMART" id="SM00535">
    <property type="entry name" value="RIBOc"/>
    <property type="match status" value="1"/>
</dbReference>
<dbReference type="SUPFAM" id="SSF54768">
    <property type="entry name" value="dsRNA-binding domain-like"/>
    <property type="match status" value="1"/>
</dbReference>
<dbReference type="SUPFAM" id="SSF69065">
    <property type="entry name" value="RNase III domain-like"/>
    <property type="match status" value="1"/>
</dbReference>
<dbReference type="PROSITE" id="PS50137">
    <property type="entry name" value="DS_RBD"/>
    <property type="match status" value="1"/>
</dbReference>
<dbReference type="PROSITE" id="PS50142">
    <property type="entry name" value="RNASE_3_2"/>
    <property type="match status" value="1"/>
</dbReference>
<gene>
    <name evidence="1" type="primary">rnc</name>
    <name type="ordered locus">llmg_1753</name>
</gene>
<name>RNC_LACLM</name>
<keyword id="KW-0963">Cytoplasm</keyword>
<keyword id="KW-0255">Endonuclease</keyword>
<keyword id="KW-0378">Hydrolase</keyword>
<keyword id="KW-0460">Magnesium</keyword>
<keyword id="KW-0479">Metal-binding</keyword>
<keyword id="KW-0507">mRNA processing</keyword>
<keyword id="KW-0540">Nuclease</keyword>
<keyword id="KW-0694">RNA-binding</keyword>
<keyword id="KW-0698">rRNA processing</keyword>
<keyword id="KW-0699">rRNA-binding</keyword>
<keyword id="KW-0819">tRNA processing</keyword>
<accession>A2RLZ8</accession>
<organism>
    <name type="scientific">Lactococcus lactis subsp. cremoris (strain MG1363)</name>
    <dbReference type="NCBI Taxonomy" id="416870"/>
    <lineage>
        <taxon>Bacteria</taxon>
        <taxon>Bacillati</taxon>
        <taxon>Bacillota</taxon>
        <taxon>Bacilli</taxon>
        <taxon>Lactobacillales</taxon>
        <taxon>Streptococcaceae</taxon>
        <taxon>Lactococcus</taxon>
        <taxon>Lactococcus cremoris subsp. cremoris</taxon>
    </lineage>
</organism>
<protein>
    <recommendedName>
        <fullName evidence="1">Ribonuclease 3</fullName>
        <ecNumber evidence="1">3.1.26.3</ecNumber>
    </recommendedName>
    <alternativeName>
        <fullName evidence="1">Ribonuclease III</fullName>
        <shortName evidence="1">RNase III</shortName>
    </alternativeName>
</protein>
<feature type="chain" id="PRO_1000075768" description="Ribonuclease 3">
    <location>
        <begin position="1"/>
        <end position="231"/>
    </location>
</feature>
<feature type="domain" description="RNase III" evidence="1">
    <location>
        <begin position="5"/>
        <end position="134"/>
    </location>
</feature>
<feature type="domain" description="DRBM" evidence="1">
    <location>
        <begin position="160"/>
        <end position="229"/>
    </location>
</feature>
<feature type="active site" evidence="1">
    <location>
        <position position="51"/>
    </location>
</feature>
<feature type="active site" evidence="1">
    <location>
        <position position="123"/>
    </location>
</feature>
<feature type="binding site" evidence="1">
    <location>
        <position position="47"/>
    </location>
    <ligand>
        <name>Mg(2+)</name>
        <dbReference type="ChEBI" id="CHEBI:18420"/>
    </ligand>
</feature>
<feature type="binding site" evidence="1">
    <location>
        <position position="120"/>
    </location>
    <ligand>
        <name>Mg(2+)</name>
        <dbReference type="ChEBI" id="CHEBI:18420"/>
    </ligand>
</feature>
<feature type="binding site" evidence="1">
    <location>
        <position position="123"/>
    </location>
    <ligand>
        <name>Mg(2+)</name>
        <dbReference type="ChEBI" id="CHEBI:18420"/>
    </ligand>
</feature>